<proteinExistence type="evidence at protein level"/>
<name>PAN3_HUMAN</name>
<comment type="function">
    <text evidence="2 4 9">Regulatory subunit of the poly(A)-nuclease (PAN) deadenylation complex, one of two cytoplasmic mRNA deadenylases involved in general and miRNA-mediated mRNA turnover. PAN specifically shortens poly(A) tails of RNA and the activity is stimulated by poly(A)-binding protein (PABP). PAN deadenylation is followed by rapid degradation of the shortened mRNA tails by the CCR4-NOT complex. Deadenylated mRNAs are then degraded by two alternative mechanisms, namely exosome-mediated 3'-5' exonucleolytic degradation, or deadenylation-dependent mRNA decapping and subsequent 5'-3' exonucleolytic degradation by XRN1. PAN3 acts as a regulator for PAN activity, recruiting the catalytic subunit PAN2 to mRNA via its interaction with RNA and PABP, and to miRNA targets via its interaction with GW182 family proteins.</text>
</comment>
<comment type="function">
    <molecule>Isoform 1</molecule>
    <text evidence="10">Decreases PAN2-mediated deadenylation, possibly by preventing progression into the second CCR4-NOT mediated stage of biphasic deadenylation. Has a significant effect on mRNA stability, generally stabilizing a subset of the transcriptome. Stabilizes mRNAs degraded by the AU-rich element (ARE)-mediated mRNA decay pathway but promotes degradation of mRNAs by the microRNA-mediated pathway (PubMed:28559491). Its activity influences mRNP remodeling, specifically reducing formation of a subset of P-bodies containing GW220, an isoform of TNRC6A (PubMed:28559491).</text>
</comment>
<comment type="function">
    <molecule>Isoform 3</molecule>
    <text evidence="10">Enhances PAN2 deadenylase activity and has an extensive effect on mRNA stability, generally enhancing mRNA decay across the transcriptome by multiple pathways, including the AU-rich element (ARE)-mediated pathway, microRNA-mediated pathway and the nonsense-mediated pathway (NMD) (PubMed:28559491). Its activity is required for efficient P-body formation (PubMed:28559491). May be involved in regulating mRNAs of genes involved in cell cycle progression and cell proliferation (PubMed:28559491).</text>
</comment>
<comment type="subunit">
    <text evidence="2 4 5 6 8 9">Homodimer (PubMed:23932717). Forms a heterotrimer with a catalytic subunit PAN2 to form the poly(A)-nuclease (PAN) deadenylation complex (PubMed:14583602, PubMed:23932717). Interacts (via PAM-2 motif) with poly(A)-binding protein PABPC1 (via PABC domain), conferring substrate specificity of the enzyme complex (PubMed:17595167, PubMed:18056425). Interacts with the GW182 family proteins TNRC6A, TNRC6B and TNRC6 (PubMed:21981923). Interacts with YTHDF3 (By similarity).</text>
</comment>
<comment type="subunit">
    <molecule>Isoform 1</molecule>
    <text evidence="10">Interacts with PAN2 (PubMed:28559491). Interacts (via N-terminus) with PABPC1 at lower efficiency than isoform 3 (PubMed:28559491).</text>
</comment>
<comment type="subunit">
    <molecule>Isoform 3</molecule>
    <text evidence="10">Interacts with PAN2 (PubMed:28559491). Interacts (via N-terminus) with PABPC1 at higher efficiency than isoform 1 (PubMed:28559491).</text>
</comment>
<comment type="interaction">
    <interactant intactId="EBI-2513054">
        <id>Q58A45</id>
    </interactant>
    <interactant intactId="EBI-81531">
        <id>P11940</id>
        <label>PABPC1</label>
    </interactant>
    <organismsDiffer>false</organismsDiffer>
    <experiments>4</experiments>
</comment>
<comment type="interaction">
    <interactant intactId="EBI-2513054">
        <id>Q58A45</id>
    </interactant>
    <interactant intactId="EBI-1058976">
        <id>Q504Q3</id>
        <label>PAN2</label>
    </interactant>
    <organismsDiffer>false</organismsDiffer>
    <experiments>7</experiments>
</comment>
<comment type="interaction">
    <interactant intactId="EBI-2513054">
        <id>Q58A45</id>
    </interactant>
    <interactant intactId="EBI-2269715">
        <id>Q8NDV7</id>
        <label>TNRC6A</label>
    </interactant>
    <organismsDiffer>false</organismsDiffer>
    <experiments>2</experiments>
</comment>
<comment type="interaction">
    <interactant intactId="EBI-2513054">
        <id>Q58A45</id>
    </interactant>
    <interactant intactId="EBI-947158">
        <id>Q9UPQ9</id>
        <label>TNRC6B</label>
    </interactant>
    <organismsDiffer>false</organismsDiffer>
    <experiments>4</experiments>
</comment>
<comment type="interaction">
    <interactant intactId="EBI-2513054">
        <id>Q58A45</id>
    </interactant>
    <interactant intactId="EBI-6507625">
        <id>Q9HCJ0</id>
        <label>TNRC6C</label>
    </interactant>
    <organismsDiffer>false</organismsDiffer>
    <experiments>4</experiments>
</comment>
<comment type="subcellular location">
    <subcellularLocation>
        <location evidence="2 4 7">Cytoplasm</location>
        <location evidence="2 4 7">P-body</location>
    </subcellularLocation>
</comment>
<comment type="subcellular location">
    <molecule>Isoform 1</molecule>
    <subcellularLocation>
        <location>Cytoplasm</location>
    </subcellularLocation>
    <subcellularLocation>
        <location evidence="10">Nucleus</location>
    </subcellularLocation>
    <text evidence="10">Shuttles between cytoplasm and nucleus.</text>
</comment>
<comment type="subcellular location">
    <molecule>Isoform 3</molecule>
    <subcellularLocation>
        <location evidence="10">Cytoplasm</location>
    </subcellularLocation>
</comment>
<comment type="alternative products">
    <event type="alternative splicing"/>
    <isoform>
        <id>Q58A45-1</id>
        <name>1</name>
        <name>Pan3b</name>
        <name evidence="14">Pan3L</name>
        <sequence type="displayed"/>
    </isoform>
    <isoform>
        <id>Q58A45-2</id>
        <name>2</name>
        <sequence type="described" ref="VSP_023753 VSP_023755"/>
    </isoform>
    <isoform>
        <id>Q58A45-3</id>
        <name>3</name>
        <name evidence="14">Pan3S</name>
        <sequence type="described" ref="VSP_023754"/>
    </isoform>
    <isoform>
        <id>Q58A45-4</id>
        <name>4</name>
        <sequence type="described" ref="VSP_041648 VSP_041649"/>
    </isoform>
</comment>
<comment type="domain">
    <text evidence="2">The N-terminal zinc finger binds to poly(A) RNA.</text>
</comment>
<comment type="domain">
    <text evidence="2">Contains a pseudokinase domain. The protein kinase domain is predicted to be catalytically inactive because some of the residues important for catalytic activity are substituted and it lacks the equivalent of the binding site for a peptide substrate. However, it has retained an ATP-binding site and ATP-binding is required for mRNA degradation, stimulating the activity of the PAN2 nuclease in vitro. The nucleotide-binding site is juxtaposed to the RNase active site of PAN2 in the complex and may actually bind nucleosides of a poly(A) RNA rather than ATP, feeding the poly(A)-tail to the active site of the deadenylase and thus increasing the efficiency with which this distributive enzyme degrades oligo(A) RNAs.</text>
</comment>
<comment type="domain">
    <text evidence="2 4 9">The pseudokinase domain, the coiled-coil (CC), and C-terminal knob domain (CK) form a structural unit (PKC) that forms an extensive high-affinity interaction surface for PAN2.</text>
</comment>
<comment type="similarity">
    <text evidence="2">Belongs to the protein kinase superfamily. PAN3 family.</text>
</comment>
<comment type="sequence caution" evidence="15">
    <conflict type="erroneous initiation">
        <sequence resource="EMBL-CDS" id="AAI28180"/>
    </conflict>
    <text>Truncated N-terminus.</text>
</comment>
<comment type="sequence caution" evidence="15">
    <conflict type="erroneous gene model prediction">
        <sequence resource="EMBL-CDS" id="ABK41888"/>
    </conflict>
</comment>
<comment type="sequence caution" evidence="15">
    <conflict type="erroneous initiation">
        <sequence resource="EMBL-CDS" id="BAC03632"/>
    </conflict>
    <text>Truncated N-terminus.</text>
</comment>
<organism>
    <name type="scientific">Homo sapiens</name>
    <name type="common">Human</name>
    <dbReference type="NCBI Taxonomy" id="9606"/>
    <lineage>
        <taxon>Eukaryota</taxon>
        <taxon>Metazoa</taxon>
        <taxon>Chordata</taxon>
        <taxon>Craniata</taxon>
        <taxon>Vertebrata</taxon>
        <taxon>Euteleostomi</taxon>
        <taxon>Mammalia</taxon>
        <taxon>Eutheria</taxon>
        <taxon>Euarchontoglires</taxon>
        <taxon>Primates</taxon>
        <taxon>Haplorrhini</taxon>
        <taxon>Catarrhini</taxon>
        <taxon>Hominidae</taxon>
        <taxon>Homo</taxon>
    </lineage>
</organism>
<gene>
    <name evidence="2" type="primary">PAN3</name>
</gene>
<evidence type="ECO:0000250" key="1">
    <source>
        <dbReference type="UniProtKB" id="Q640Q5"/>
    </source>
</evidence>
<evidence type="ECO:0000255" key="2">
    <source>
        <dbReference type="HAMAP-Rule" id="MF_03181"/>
    </source>
</evidence>
<evidence type="ECO:0000256" key="3">
    <source>
        <dbReference type="SAM" id="MobiDB-lite"/>
    </source>
</evidence>
<evidence type="ECO:0000269" key="4">
    <source>
    </source>
</evidence>
<evidence type="ECO:0000269" key="5">
    <source>
    </source>
</evidence>
<evidence type="ECO:0000269" key="6">
    <source>
    </source>
</evidence>
<evidence type="ECO:0000269" key="7">
    <source>
    </source>
</evidence>
<evidence type="ECO:0000269" key="8">
    <source>
    </source>
</evidence>
<evidence type="ECO:0000269" key="9">
    <source>
    </source>
</evidence>
<evidence type="ECO:0000269" key="10">
    <source>
    </source>
</evidence>
<evidence type="ECO:0000303" key="11">
    <source>
    </source>
</evidence>
<evidence type="ECO:0000303" key="12">
    <source>
    </source>
</evidence>
<evidence type="ECO:0000303" key="13">
    <source>
    </source>
</evidence>
<evidence type="ECO:0000303" key="14">
    <source>
    </source>
</evidence>
<evidence type="ECO:0000305" key="15"/>
<evidence type="ECO:0007744" key="16">
    <source>
    </source>
</evidence>
<sequence length="887" mass="95613">MNSGGGLPPPSAAASPSSSSLAAAVAVVAPPGVGGVPGGAAVGVKLKYCRYYAKDKTCFYGEECQFLHEDPAAGAAPGLGLHSNSVPLALAGAPVAGFPPGAVAGGGAGPPPGPKKPDLGDPGTGAAAGGGGSSGGLDGPRLAIPGMDGGALTDTSLTDSYFSTSFIGVNGFGSPVETKYPLMQRMTNSSSSPSLLNDSAKPYSAHDPLTSPASSLFNDFGALNISQRRKPRKYRLGMLEERLVPMGSKARKAKNPIGCLADRCKSGVPINMVWWNRVTENNLQTPNPTASEFIPKGGSTSRLSNVSQSNMSAFSQVFSHPSMGSPATAGLAPGMSLSAGSSPLHSPKITPHTSPAPRRRSHTPNPASYMVPSSASTSVNNPVSQTPSSGQVIQKETVGGTTYFYTDTTPAPLTGMVFPNYHIYPPTAPHVAYMQPKANAPSFFMADELRQELINRHLITMAQIDQADMPAVPTEVDSYHSLFPLEPLPPPNRIQKSSNFGYITSCYKAVNSKDDLPYCLRRIHGFRLVNTKCMVLVDMWKKIQHSNIVTLREVFTTKAFAEPSLVFAYDFHAGGETMMSRHFNDPNADAYFTKRKWGQHEGPLPRQHAGLLPESLIWAYIVQLSSALRTIHTAGLACRVMDPTKILITGKTRLRVNCVGVFDVLTFDNSQNNNPLALMAQYQQADLISLGKVVLALACNSLAGIQRENLQKAMELVTINYSSDLKNLILYLLTDQNRMRSVNDIMPMIGARFYTQLDAAQMRNDVIEEDLAKEVQNGRLFRLLAKLGTINERPEFQKDPTWSETGDRYLLKLFRDHLFHQVTEAGAPWIDLSHIISCLNKLDAGVPEKISLISRDEKSVLVVTYSDLKRCFENTFQELIAAANGQL</sequence>
<dbReference type="EMBL" id="AK091307">
    <property type="protein sequence ID" value="BAC03632.1"/>
    <property type="status" value="ALT_INIT"/>
    <property type="molecule type" value="mRNA"/>
</dbReference>
<dbReference type="EMBL" id="AK296435">
    <property type="protein sequence ID" value="BAH12353.1"/>
    <property type="molecule type" value="mRNA"/>
</dbReference>
<dbReference type="EMBL" id="EF088216">
    <property type="protein sequence ID" value="ABK41888.1"/>
    <property type="status" value="ALT_SEQ"/>
    <property type="molecule type" value="Genomic_DNA"/>
</dbReference>
<dbReference type="EMBL" id="AL138712">
    <property type="status" value="NOT_ANNOTATED_CDS"/>
    <property type="molecule type" value="Genomic_DNA"/>
</dbReference>
<dbReference type="EMBL" id="AL356915">
    <property type="status" value="NOT_ANNOTATED_CDS"/>
    <property type="molecule type" value="Genomic_DNA"/>
</dbReference>
<dbReference type="EMBL" id="BC024318">
    <property type="protein sequence ID" value="AAH24318.1"/>
    <property type="molecule type" value="mRNA"/>
</dbReference>
<dbReference type="EMBL" id="BC128179">
    <property type="protein sequence ID" value="AAI28180.1"/>
    <property type="status" value="ALT_INIT"/>
    <property type="molecule type" value="mRNA"/>
</dbReference>
<dbReference type="EMBL" id="BC128180">
    <property type="protein sequence ID" value="AAI28181.1"/>
    <property type="molecule type" value="mRNA"/>
</dbReference>
<dbReference type="EMBL" id="AB107584">
    <property type="protein sequence ID" value="BAD02262.1"/>
    <property type="molecule type" value="mRNA"/>
</dbReference>
<dbReference type="EMBL" id="AB109552">
    <property type="protein sequence ID" value="BAD93184.1"/>
    <property type="molecule type" value="mRNA"/>
</dbReference>
<dbReference type="EMBL" id="BX647740">
    <property type="protein sequence ID" value="CAI45987.2"/>
    <property type="molecule type" value="mRNA"/>
</dbReference>
<dbReference type="CCDS" id="CCDS9329.2">
    <molecule id="Q58A45-1"/>
</dbReference>
<dbReference type="RefSeq" id="NP_787050.6">
    <molecule id="Q58A45-1"/>
    <property type="nucleotide sequence ID" value="NM_175854.7"/>
</dbReference>
<dbReference type="RefSeq" id="XP_005266390.1">
    <molecule id="Q58A45-3"/>
    <property type="nucleotide sequence ID" value="XM_005266333.4"/>
</dbReference>
<dbReference type="RefSeq" id="XP_005266391.1">
    <property type="nucleotide sequence ID" value="XM_005266334.1"/>
</dbReference>
<dbReference type="RefSeq" id="XP_016876021.1">
    <property type="nucleotide sequence ID" value="XM_017020532.1"/>
</dbReference>
<dbReference type="RefSeq" id="XP_016876022.1">
    <property type="nucleotide sequence ID" value="XM_017020533.1"/>
</dbReference>
<dbReference type="RefSeq" id="XP_047286208.1">
    <molecule id="Q58A45-2"/>
    <property type="nucleotide sequence ID" value="XM_047430252.1"/>
</dbReference>
<dbReference type="RefSeq" id="XP_054230377.1">
    <molecule id="Q58A45-3"/>
    <property type="nucleotide sequence ID" value="XM_054374402.1"/>
</dbReference>
<dbReference type="RefSeq" id="XP_054230385.1">
    <molecule id="Q58A45-2"/>
    <property type="nucleotide sequence ID" value="XM_054374410.1"/>
</dbReference>
<dbReference type="SMR" id="Q58A45"/>
<dbReference type="BioGRID" id="129129">
    <property type="interactions" value="80"/>
</dbReference>
<dbReference type="ComplexPortal" id="CPX-2259">
    <molecule id="Q58A45-2"/>
    <property type="entry name" value="PAN2-PAN3 mRNA deadenylation complex"/>
</dbReference>
<dbReference type="CORUM" id="Q58A45"/>
<dbReference type="DIP" id="DIP-53755N"/>
<dbReference type="ELM" id="Q58A45"/>
<dbReference type="FunCoup" id="Q58A45">
    <property type="interactions" value="2573"/>
</dbReference>
<dbReference type="IntAct" id="Q58A45">
    <property type="interactions" value="27"/>
</dbReference>
<dbReference type="MINT" id="Q58A45"/>
<dbReference type="STRING" id="9606.ENSP00000370345"/>
<dbReference type="ChEMBL" id="CHEMBL4105985"/>
<dbReference type="GlyGen" id="Q58A45">
    <property type="glycosylation" value="2 sites, 1 O-linked glycan (2 sites)"/>
</dbReference>
<dbReference type="iPTMnet" id="Q58A45"/>
<dbReference type="PhosphoSitePlus" id="Q58A45"/>
<dbReference type="BioMuta" id="PAN3"/>
<dbReference type="DMDM" id="341942213"/>
<dbReference type="jPOST" id="Q58A45"/>
<dbReference type="MassIVE" id="Q58A45"/>
<dbReference type="PaxDb" id="9606-ENSP00000370345"/>
<dbReference type="PeptideAtlas" id="Q58A45"/>
<dbReference type="ProteomicsDB" id="62604">
    <molecule id="Q58A45-1"/>
</dbReference>
<dbReference type="ProteomicsDB" id="62605">
    <molecule id="Q58A45-2"/>
</dbReference>
<dbReference type="ProteomicsDB" id="62606">
    <molecule id="Q58A45-3"/>
</dbReference>
<dbReference type="ProteomicsDB" id="62607">
    <molecule id="Q58A45-4"/>
</dbReference>
<dbReference type="Pumba" id="Q58A45"/>
<dbReference type="Antibodypedia" id="22704">
    <property type="antibodies" value="136 antibodies from 21 providers"/>
</dbReference>
<dbReference type="DNASU" id="255967"/>
<dbReference type="Ensembl" id="ENST00000380958.8">
    <molecule id="Q58A45-1"/>
    <property type="protein sequence ID" value="ENSP00000370345.3"/>
    <property type="gene ID" value="ENSG00000152520.14"/>
</dbReference>
<dbReference type="GeneID" id="255967"/>
<dbReference type="KEGG" id="hsa:255967"/>
<dbReference type="MANE-Select" id="ENST00000380958.8">
    <property type="protein sequence ID" value="ENSP00000370345.3"/>
    <property type="RefSeq nucleotide sequence ID" value="NM_175854.8"/>
    <property type="RefSeq protein sequence ID" value="NP_787050.6"/>
</dbReference>
<dbReference type="UCSC" id="uc001urz.4">
    <molecule id="Q58A45-1"/>
    <property type="organism name" value="human"/>
</dbReference>
<dbReference type="AGR" id="HGNC:29991"/>
<dbReference type="CTD" id="255967"/>
<dbReference type="DisGeNET" id="255967"/>
<dbReference type="GeneCards" id="PAN3"/>
<dbReference type="HGNC" id="HGNC:29991">
    <property type="gene designation" value="PAN3"/>
</dbReference>
<dbReference type="HPA" id="ENSG00000152520">
    <property type="expression patterns" value="Low tissue specificity"/>
</dbReference>
<dbReference type="MIM" id="617448">
    <property type="type" value="gene"/>
</dbReference>
<dbReference type="neXtProt" id="NX_Q58A45"/>
<dbReference type="OpenTargets" id="ENSG00000152520"/>
<dbReference type="PharmGKB" id="PA144596398"/>
<dbReference type="VEuPathDB" id="HostDB:ENSG00000152520"/>
<dbReference type="eggNOG" id="KOG3741">
    <property type="taxonomic scope" value="Eukaryota"/>
</dbReference>
<dbReference type="GeneTree" id="ENSGT00390000001504"/>
<dbReference type="InParanoid" id="Q58A45"/>
<dbReference type="OMA" id="ASHVINM"/>
<dbReference type="OrthoDB" id="204958at2759"/>
<dbReference type="PAN-GO" id="Q58A45">
    <property type="GO annotations" value="4 GO annotations based on evolutionary models"/>
</dbReference>
<dbReference type="PhylomeDB" id="Q58A45"/>
<dbReference type="TreeFam" id="TF105865"/>
<dbReference type="PathwayCommons" id="Q58A45"/>
<dbReference type="Reactome" id="R-HSA-429947">
    <property type="pathway name" value="Deadenylation of mRNA"/>
</dbReference>
<dbReference type="SignaLink" id="Q58A45"/>
<dbReference type="SIGNOR" id="Q58A45"/>
<dbReference type="BioGRID-ORCS" id="255967">
    <property type="hits" value="28 hits in 1157 CRISPR screens"/>
</dbReference>
<dbReference type="CD-CODE" id="232F8A39">
    <property type="entry name" value="P-body"/>
</dbReference>
<dbReference type="CD-CODE" id="DEE660B4">
    <property type="entry name" value="Stress granule"/>
</dbReference>
<dbReference type="ChiTaRS" id="PAN3">
    <property type="organism name" value="human"/>
</dbReference>
<dbReference type="GenomeRNAi" id="255967"/>
<dbReference type="Pharos" id="Q58A45">
    <property type="development level" value="Tdark"/>
</dbReference>
<dbReference type="PRO" id="PR:Q58A45"/>
<dbReference type="Proteomes" id="UP000005640">
    <property type="component" value="Chromosome 13"/>
</dbReference>
<dbReference type="RNAct" id="Q58A45">
    <property type="molecule type" value="protein"/>
</dbReference>
<dbReference type="Bgee" id="ENSG00000152520">
    <property type="expression patterns" value="Expressed in pancreatic ductal cell and 194 other cell types or tissues"/>
</dbReference>
<dbReference type="ExpressionAtlas" id="Q58A45">
    <property type="expression patterns" value="baseline and differential"/>
</dbReference>
<dbReference type="GO" id="GO:0005829">
    <property type="term" value="C:cytosol"/>
    <property type="evidence" value="ECO:0000304"/>
    <property type="project" value="Reactome"/>
</dbReference>
<dbReference type="GO" id="GO:0005634">
    <property type="term" value="C:nucleus"/>
    <property type="evidence" value="ECO:0007669"/>
    <property type="project" value="UniProtKB-SubCell"/>
</dbReference>
<dbReference type="GO" id="GO:0000932">
    <property type="term" value="C:P-body"/>
    <property type="evidence" value="ECO:0000318"/>
    <property type="project" value="GO_Central"/>
</dbReference>
<dbReference type="GO" id="GO:0031251">
    <property type="term" value="C:PAN complex"/>
    <property type="evidence" value="ECO:0000314"/>
    <property type="project" value="UniProtKB"/>
</dbReference>
<dbReference type="GO" id="GO:0005524">
    <property type="term" value="F:ATP binding"/>
    <property type="evidence" value="ECO:0007669"/>
    <property type="project" value="UniProtKB-UniRule"/>
</dbReference>
<dbReference type="GO" id="GO:0008143">
    <property type="term" value="F:poly(A) binding"/>
    <property type="evidence" value="ECO:0000318"/>
    <property type="project" value="GO_Central"/>
</dbReference>
<dbReference type="GO" id="GO:0004672">
    <property type="term" value="F:protein kinase activity"/>
    <property type="evidence" value="ECO:0007669"/>
    <property type="project" value="InterPro"/>
</dbReference>
<dbReference type="GO" id="GO:0008270">
    <property type="term" value="F:zinc ion binding"/>
    <property type="evidence" value="ECO:0007669"/>
    <property type="project" value="UniProtKB-KW"/>
</dbReference>
<dbReference type="GO" id="GO:0000290">
    <property type="term" value="P:deadenylation-dependent decapping of nuclear-transcribed mRNA"/>
    <property type="evidence" value="ECO:0007669"/>
    <property type="project" value="Ensembl"/>
</dbReference>
<dbReference type="GO" id="GO:0006397">
    <property type="term" value="P:mRNA processing"/>
    <property type="evidence" value="ECO:0007669"/>
    <property type="project" value="UniProtKB-KW"/>
</dbReference>
<dbReference type="GO" id="GO:0000289">
    <property type="term" value="P:nuclear-transcribed mRNA poly(A) tail shortening"/>
    <property type="evidence" value="ECO:0000318"/>
    <property type="project" value="GO_Central"/>
</dbReference>
<dbReference type="GO" id="GO:0010606">
    <property type="term" value="P:positive regulation of cytoplasmic mRNA processing body assembly"/>
    <property type="evidence" value="ECO:0007669"/>
    <property type="project" value="UniProtKB-UniRule"/>
</dbReference>
<dbReference type="GO" id="GO:0006605">
    <property type="term" value="P:protein targeting"/>
    <property type="evidence" value="ECO:0007669"/>
    <property type="project" value="Ensembl"/>
</dbReference>
<dbReference type="FunFam" id="1.10.287.3700:FF:000001">
    <property type="entry name" value="PAN2-PAN3 deadenylation complex subunit PAN3"/>
    <property type="match status" value="1"/>
</dbReference>
<dbReference type="FunFam" id="1.10.510.10:FF:000168">
    <property type="entry name" value="PAN2-PAN3 deadenylation complex subunit PAN3"/>
    <property type="match status" value="1"/>
</dbReference>
<dbReference type="FunFam" id="1.20.5.5160:FF:000001">
    <property type="entry name" value="PAN2-PAN3 deadenylation complex subunit PAN3"/>
    <property type="match status" value="1"/>
</dbReference>
<dbReference type="Gene3D" id="1.10.287.3700">
    <property type="match status" value="1"/>
</dbReference>
<dbReference type="Gene3D" id="1.20.5.5160">
    <property type="match status" value="1"/>
</dbReference>
<dbReference type="Gene3D" id="1.10.510.10">
    <property type="entry name" value="Transferase(Phosphotransferase) domain 1"/>
    <property type="match status" value="1"/>
</dbReference>
<dbReference type="HAMAP" id="MF_03181">
    <property type="entry name" value="PAN3"/>
    <property type="match status" value="1"/>
</dbReference>
<dbReference type="InterPro" id="IPR011009">
    <property type="entry name" value="Kinase-like_dom_sf"/>
</dbReference>
<dbReference type="InterPro" id="IPR030844">
    <property type="entry name" value="PAN3"/>
</dbReference>
<dbReference type="InterPro" id="IPR041332">
    <property type="entry name" value="Pan3_PK"/>
</dbReference>
<dbReference type="InterPro" id="IPR000719">
    <property type="entry name" value="Prot_kinase_dom"/>
</dbReference>
<dbReference type="InterPro" id="IPR000571">
    <property type="entry name" value="Znf_CCCH"/>
</dbReference>
<dbReference type="InterPro" id="IPR036855">
    <property type="entry name" value="Znf_CCCH_sf"/>
</dbReference>
<dbReference type="PANTHER" id="PTHR12272">
    <property type="entry name" value="DEADENYLATION COMPLEX SUBUNIT PAN3"/>
    <property type="match status" value="1"/>
</dbReference>
<dbReference type="PANTHER" id="PTHR12272:SF11">
    <property type="entry name" value="PAN2-PAN3 DEADENYLATION COMPLEX SUBUNIT PAN3"/>
    <property type="match status" value="1"/>
</dbReference>
<dbReference type="Pfam" id="PF18101">
    <property type="entry name" value="Pan3_PK"/>
    <property type="match status" value="1"/>
</dbReference>
<dbReference type="SMART" id="SM00356">
    <property type="entry name" value="ZnF_C3H1"/>
    <property type="match status" value="1"/>
</dbReference>
<dbReference type="SUPFAM" id="SSF90229">
    <property type="entry name" value="CCCH zinc finger"/>
    <property type="match status" value="1"/>
</dbReference>
<dbReference type="SUPFAM" id="SSF56112">
    <property type="entry name" value="Protein kinase-like (PK-like)"/>
    <property type="match status" value="1"/>
</dbReference>
<dbReference type="PROSITE" id="PS50011">
    <property type="entry name" value="PROTEIN_KINASE_DOM"/>
    <property type="match status" value="1"/>
</dbReference>
<dbReference type="PROSITE" id="PS50103">
    <property type="entry name" value="ZF_C3H1"/>
    <property type="match status" value="1"/>
</dbReference>
<feature type="chain" id="PRO_0000280525" description="PAN2-PAN3 deadenylation complex subunit PAN3">
    <location>
        <begin position="1"/>
        <end position="887"/>
    </location>
</feature>
<feature type="zinc finger region" description="C3H1-type" evidence="2">
    <location>
        <begin position="43"/>
        <end position="71"/>
    </location>
</feature>
<feature type="region of interest" description="Disordered" evidence="3">
    <location>
        <begin position="102"/>
        <end position="147"/>
    </location>
</feature>
<feature type="region of interest" description="Necessary and sufficient for interaction with PABPC1 but not needed for interaction with PAN2" evidence="10">
    <location>
        <begin position="147"/>
        <end position="498"/>
    </location>
</feature>
<feature type="region of interest" description="Disordered" evidence="3">
    <location>
        <begin position="284"/>
        <end position="307"/>
    </location>
</feature>
<feature type="region of interest" description="Disordered" evidence="3">
    <location>
        <begin position="325"/>
        <end position="392"/>
    </location>
</feature>
<feature type="region of interest" description="Pseudokinase domain" evidence="2">
    <location>
        <begin position="463"/>
        <end position="750"/>
    </location>
</feature>
<feature type="region of interest" description="Knob domain" evidence="2">
    <location>
        <begin position="790"/>
        <end position="887"/>
    </location>
</feature>
<feature type="coiled-coil region" evidence="2">
    <location>
        <begin position="751"/>
        <end position="789"/>
    </location>
</feature>
<feature type="short sequence motif" description="PABPC-interacting motif-2 (PAM-2)" evidence="2 5">
    <location>
        <begin position="284"/>
        <end position="299"/>
    </location>
</feature>
<feature type="compositionally biased region" description="Gly residues" evidence="3">
    <location>
        <begin position="122"/>
        <end position="138"/>
    </location>
</feature>
<feature type="compositionally biased region" description="Polar residues" evidence="3">
    <location>
        <begin position="298"/>
        <end position="307"/>
    </location>
</feature>
<feature type="compositionally biased region" description="Polar residues" evidence="3">
    <location>
        <begin position="363"/>
        <end position="392"/>
    </location>
</feature>
<feature type="binding site" evidence="2">
    <location>
        <position position="521"/>
    </location>
    <ligand>
        <name>ATP</name>
        <dbReference type="ChEBI" id="CHEBI:30616"/>
    </ligand>
</feature>
<feature type="binding site" evidence="2">
    <location>
        <begin position="570"/>
        <end position="577"/>
    </location>
    <ligand>
        <name>ATP</name>
        <dbReference type="ChEBI" id="CHEBI:30616"/>
    </ligand>
</feature>
<feature type="binding site" evidence="2">
    <location>
        <begin position="644"/>
        <end position="645"/>
    </location>
    <ligand>
        <name>ATP</name>
        <dbReference type="ChEBI" id="CHEBI:30616"/>
    </ligand>
</feature>
<feature type="modified residue" description="Phosphoserine" evidence="16">
    <location>
        <position position="354"/>
    </location>
</feature>
<feature type="modified residue" description="Phosphoserine" evidence="1">
    <location>
        <position position="361"/>
    </location>
</feature>
<feature type="splice variant" id="VSP_023753" description="In isoform 2." evidence="13">
    <location>
        <begin position="1"/>
        <end position="332"/>
    </location>
</feature>
<feature type="splice variant" id="VSP_023754" description="In isoform 3." evidence="11 13">
    <location>
        <begin position="231"/>
        <end position="284"/>
    </location>
</feature>
<feature type="splice variant" id="VSP_023755" description="In isoform 2." evidence="13">
    <original>P</original>
    <variation>MKLTDSTKGWIVWAALDSSMR</variation>
    <location>
        <position position="333"/>
    </location>
</feature>
<feature type="splice variant" id="VSP_041648" description="In isoform 4." evidence="12">
    <original>QADL</original>
    <variation>VSKN</variation>
    <location>
        <begin position="684"/>
        <end position="687"/>
    </location>
</feature>
<feature type="splice variant" id="VSP_041649" description="In isoform 4." evidence="12">
    <location>
        <begin position="688"/>
        <end position="887"/>
    </location>
</feature>
<feature type="mutagenesis site" description="Reduces interaction with polyadenylate-binding protein." evidence="6">
    <original>Y</original>
    <variation>A</variation>
    <location>
        <position position="203"/>
    </location>
</feature>
<feature type="mutagenesis site" description="Reduces interaction with polyadenylate-binding protein." evidence="5 6">
    <original>F</original>
    <variation>A</variation>
    <location>
        <position position="293"/>
    </location>
</feature>
<feature type="sequence conflict" description="In Ref. 5; BAD02262." evidence="15" ref="5">
    <original>R</original>
    <variation>Q</variation>
    <location>
        <position position="229"/>
    </location>
</feature>
<feature type="sequence conflict" description="In Ref. 4; AAI28181." evidence="15" ref="4">
    <original>Y</original>
    <variation>H</variation>
    <location>
        <position position="569"/>
    </location>
</feature>
<feature type="sequence conflict" description="In Ref. 1; BAC03632." evidence="15" ref="1">
    <original>R</original>
    <variation>G</variation>
    <location>
        <position position="793"/>
    </location>
</feature>
<feature type="sequence conflict" description="In Ref. 5; BAD02262/BAD93184." evidence="15" ref="5">
    <original>D</original>
    <variation>G</variation>
    <location>
        <position position="856"/>
    </location>
</feature>
<accession>Q58A45</accession>
<accession>A0N0X1</accession>
<accession>A1A4Y8</accession>
<accession>A1A4Y9</accession>
<accession>B1ALF1</accession>
<accession>B7Z3W7</accession>
<accession>Q0D2P2</accession>
<accession>Q5HYG6</accession>
<accession>Q5T515</accession>
<accession>Q5T516</accession>
<accession>Q5TBA0</accession>
<accession>Q76E13</accession>
<accession>Q8NBA6</accession>
<protein>
    <recommendedName>
        <fullName evidence="2">PAN2-PAN3 deadenylation complex subunit PAN3</fullName>
    </recommendedName>
    <alternativeName>
        <fullName evidence="2">PAB1P-dependent poly(A)-specific ribonuclease</fullName>
    </alternativeName>
    <alternativeName>
        <fullName evidence="2">Poly(A)-nuclease deadenylation complex subunit 3</fullName>
        <shortName evidence="2">PAN deadenylation complex subunit 3</shortName>
    </alternativeName>
</protein>
<reference key="1">
    <citation type="journal article" date="2004" name="Nat. Genet.">
        <title>Complete sequencing and characterization of 21,243 full-length human cDNAs.</title>
        <authorList>
            <person name="Ota T."/>
            <person name="Suzuki Y."/>
            <person name="Nishikawa T."/>
            <person name="Otsuki T."/>
            <person name="Sugiyama T."/>
            <person name="Irie R."/>
            <person name="Wakamatsu A."/>
            <person name="Hayashi K."/>
            <person name="Sato H."/>
            <person name="Nagai K."/>
            <person name="Kimura K."/>
            <person name="Makita H."/>
            <person name="Sekine M."/>
            <person name="Obayashi M."/>
            <person name="Nishi T."/>
            <person name="Shibahara T."/>
            <person name="Tanaka T."/>
            <person name="Ishii S."/>
            <person name="Yamamoto J."/>
            <person name="Saito K."/>
            <person name="Kawai Y."/>
            <person name="Isono Y."/>
            <person name="Nakamura Y."/>
            <person name="Nagahari K."/>
            <person name="Murakami K."/>
            <person name="Yasuda T."/>
            <person name="Iwayanagi T."/>
            <person name="Wagatsuma M."/>
            <person name="Shiratori A."/>
            <person name="Sudo H."/>
            <person name="Hosoiri T."/>
            <person name="Kaku Y."/>
            <person name="Kodaira H."/>
            <person name="Kondo H."/>
            <person name="Sugawara M."/>
            <person name="Takahashi M."/>
            <person name="Kanda K."/>
            <person name="Yokoi T."/>
            <person name="Furuya T."/>
            <person name="Kikkawa E."/>
            <person name="Omura Y."/>
            <person name="Abe K."/>
            <person name="Kamihara K."/>
            <person name="Katsuta N."/>
            <person name="Sato K."/>
            <person name="Tanikawa M."/>
            <person name="Yamazaki M."/>
            <person name="Ninomiya K."/>
            <person name="Ishibashi T."/>
            <person name="Yamashita H."/>
            <person name="Murakawa K."/>
            <person name="Fujimori K."/>
            <person name="Tanai H."/>
            <person name="Kimata M."/>
            <person name="Watanabe M."/>
            <person name="Hiraoka S."/>
            <person name="Chiba Y."/>
            <person name="Ishida S."/>
            <person name="Ono Y."/>
            <person name="Takiguchi S."/>
            <person name="Watanabe S."/>
            <person name="Yosida M."/>
            <person name="Hotuta T."/>
            <person name="Kusano J."/>
            <person name="Kanehori K."/>
            <person name="Takahashi-Fujii A."/>
            <person name="Hara H."/>
            <person name="Tanase T.-O."/>
            <person name="Nomura Y."/>
            <person name="Togiya S."/>
            <person name="Komai F."/>
            <person name="Hara R."/>
            <person name="Takeuchi K."/>
            <person name="Arita M."/>
            <person name="Imose N."/>
            <person name="Musashino K."/>
            <person name="Yuuki H."/>
            <person name="Oshima A."/>
            <person name="Sasaki N."/>
            <person name="Aotsuka S."/>
            <person name="Yoshikawa Y."/>
            <person name="Matsunawa H."/>
            <person name="Ichihara T."/>
            <person name="Shiohata N."/>
            <person name="Sano S."/>
            <person name="Moriya S."/>
            <person name="Momiyama H."/>
            <person name="Satoh N."/>
            <person name="Takami S."/>
            <person name="Terashima Y."/>
            <person name="Suzuki O."/>
            <person name="Nakagawa S."/>
            <person name="Senoh A."/>
            <person name="Mizoguchi H."/>
            <person name="Goto Y."/>
            <person name="Shimizu F."/>
            <person name="Wakebe H."/>
            <person name="Hishigaki H."/>
            <person name="Watanabe T."/>
            <person name="Sugiyama A."/>
            <person name="Takemoto M."/>
            <person name="Kawakami B."/>
            <person name="Yamazaki M."/>
            <person name="Watanabe K."/>
            <person name="Kumagai A."/>
            <person name="Itakura S."/>
            <person name="Fukuzumi Y."/>
            <person name="Fujimori Y."/>
            <person name="Komiyama M."/>
            <person name="Tashiro H."/>
            <person name="Tanigami A."/>
            <person name="Fujiwara T."/>
            <person name="Ono T."/>
            <person name="Yamada K."/>
            <person name="Fujii Y."/>
            <person name="Ozaki K."/>
            <person name="Hirao M."/>
            <person name="Ohmori Y."/>
            <person name="Kawabata A."/>
            <person name="Hikiji T."/>
            <person name="Kobatake N."/>
            <person name="Inagaki H."/>
            <person name="Ikema Y."/>
            <person name="Okamoto S."/>
            <person name="Okitani R."/>
            <person name="Kawakami T."/>
            <person name="Noguchi S."/>
            <person name="Itoh T."/>
            <person name="Shigeta K."/>
            <person name="Senba T."/>
            <person name="Matsumura K."/>
            <person name="Nakajima Y."/>
            <person name="Mizuno T."/>
            <person name="Morinaga M."/>
            <person name="Sasaki M."/>
            <person name="Togashi T."/>
            <person name="Oyama M."/>
            <person name="Hata H."/>
            <person name="Watanabe M."/>
            <person name="Komatsu T."/>
            <person name="Mizushima-Sugano J."/>
            <person name="Satoh T."/>
            <person name="Shirai Y."/>
            <person name="Takahashi Y."/>
            <person name="Nakagawa K."/>
            <person name="Okumura K."/>
            <person name="Nagase T."/>
            <person name="Nomura N."/>
            <person name="Kikuchi H."/>
            <person name="Masuho Y."/>
            <person name="Yamashita R."/>
            <person name="Nakai K."/>
            <person name="Yada T."/>
            <person name="Nakamura Y."/>
            <person name="Ohara O."/>
            <person name="Isogai T."/>
            <person name="Sugano S."/>
        </authorList>
    </citation>
    <scope>NUCLEOTIDE SEQUENCE [LARGE SCALE MRNA] (ISOFORM 4)</scope>
    <scope>NUCLEOTIDE SEQUENCE [LARGE SCALE MRNA] OF 754-887 (ISOFORMS 1/2/3)</scope>
    <source>
        <tissue>Skin fibroblast</tissue>
    </source>
</reference>
<reference key="2">
    <citation type="submission" date="2006-10" db="EMBL/GenBank/DDBJ databases">
        <authorList>
            <consortium name="SeattleSNPs variation discovery resource"/>
        </authorList>
    </citation>
    <scope>NUCLEOTIDE SEQUENCE [GENOMIC DNA]</scope>
</reference>
<reference key="3">
    <citation type="journal article" date="2004" name="Nature">
        <title>The DNA sequence and analysis of human chromosome 13.</title>
        <authorList>
            <person name="Dunham A."/>
            <person name="Matthews L.H."/>
            <person name="Burton J."/>
            <person name="Ashurst J.L."/>
            <person name="Howe K.L."/>
            <person name="Ashcroft K.J."/>
            <person name="Beare D.M."/>
            <person name="Burford D.C."/>
            <person name="Hunt S.E."/>
            <person name="Griffiths-Jones S."/>
            <person name="Jones M.C."/>
            <person name="Keenan S.J."/>
            <person name="Oliver K."/>
            <person name="Scott C.E."/>
            <person name="Ainscough R."/>
            <person name="Almeida J.P."/>
            <person name="Ambrose K.D."/>
            <person name="Andrews D.T."/>
            <person name="Ashwell R.I.S."/>
            <person name="Babbage A.K."/>
            <person name="Bagguley C.L."/>
            <person name="Bailey J."/>
            <person name="Bannerjee R."/>
            <person name="Barlow K.F."/>
            <person name="Bates K."/>
            <person name="Beasley H."/>
            <person name="Bird C.P."/>
            <person name="Bray-Allen S."/>
            <person name="Brown A.J."/>
            <person name="Brown J.Y."/>
            <person name="Burrill W."/>
            <person name="Carder C."/>
            <person name="Carter N.P."/>
            <person name="Chapman J.C."/>
            <person name="Clamp M.E."/>
            <person name="Clark S.Y."/>
            <person name="Clarke G."/>
            <person name="Clee C.M."/>
            <person name="Clegg S.C."/>
            <person name="Cobley V."/>
            <person name="Collins J.E."/>
            <person name="Corby N."/>
            <person name="Coville G.J."/>
            <person name="Deloukas P."/>
            <person name="Dhami P."/>
            <person name="Dunham I."/>
            <person name="Dunn M."/>
            <person name="Earthrowl M.E."/>
            <person name="Ellington A.G."/>
            <person name="Faulkner L."/>
            <person name="Frankish A.G."/>
            <person name="Frankland J."/>
            <person name="French L."/>
            <person name="Garner P."/>
            <person name="Garnett J."/>
            <person name="Gilbert J.G.R."/>
            <person name="Gilson C.J."/>
            <person name="Ghori J."/>
            <person name="Grafham D.V."/>
            <person name="Gribble S.M."/>
            <person name="Griffiths C."/>
            <person name="Hall R.E."/>
            <person name="Hammond S."/>
            <person name="Harley J.L."/>
            <person name="Hart E.A."/>
            <person name="Heath P.D."/>
            <person name="Howden P.J."/>
            <person name="Huckle E.J."/>
            <person name="Hunt P.J."/>
            <person name="Hunt A.R."/>
            <person name="Johnson C."/>
            <person name="Johnson D."/>
            <person name="Kay M."/>
            <person name="Kimberley A.M."/>
            <person name="King A."/>
            <person name="Laird G.K."/>
            <person name="Langford C.J."/>
            <person name="Lawlor S."/>
            <person name="Leongamornlert D.A."/>
            <person name="Lloyd D.M."/>
            <person name="Lloyd C."/>
            <person name="Loveland J.E."/>
            <person name="Lovell J."/>
            <person name="Martin S."/>
            <person name="Mashreghi-Mohammadi M."/>
            <person name="McLaren S.J."/>
            <person name="McMurray A."/>
            <person name="Milne S."/>
            <person name="Moore M.J.F."/>
            <person name="Nickerson T."/>
            <person name="Palmer S.A."/>
            <person name="Pearce A.V."/>
            <person name="Peck A.I."/>
            <person name="Pelan S."/>
            <person name="Phillimore B."/>
            <person name="Porter K.M."/>
            <person name="Rice C.M."/>
            <person name="Searle S."/>
            <person name="Sehra H.K."/>
            <person name="Shownkeen R."/>
            <person name="Skuce C.D."/>
            <person name="Smith M."/>
            <person name="Steward C.A."/>
            <person name="Sycamore N."/>
            <person name="Tester J."/>
            <person name="Thomas D.W."/>
            <person name="Tracey A."/>
            <person name="Tromans A."/>
            <person name="Tubby B."/>
            <person name="Wall M."/>
            <person name="Wallis J.M."/>
            <person name="West A.P."/>
            <person name="Whitehead S.L."/>
            <person name="Willey D.L."/>
            <person name="Wilming L."/>
            <person name="Wray P.W."/>
            <person name="Wright M.W."/>
            <person name="Young L."/>
            <person name="Coulson A."/>
            <person name="Durbin R.M."/>
            <person name="Hubbard T."/>
            <person name="Sulston J.E."/>
            <person name="Beck S."/>
            <person name="Bentley D.R."/>
            <person name="Rogers J."/>
            <person name="Ross M.T."/>
        </authorList>
    </citation>
    <scope>NUCLEOTIDE SEQUENCE [LARGE SCALE GENOMIC DNA]</scope>
</reference>
<reference key="4">
    <citation type="journal article" date="2004" name="Genome Res.">
        <title>The status, quality, and expansion of the NIH full-length cDNA project: the Mammalian Gene Collection (MGC).</title>
        <authorList>
            <consortium name="The MGC Project Team"/>
        </authorList>
    </citation>
    <scope>NUCLEOTIDE SEQUENCE [LARGE SCALE MRNA] (ISOFORMS 2 AND 3)</scope>
    <scope>NUCLEOTIDE SEQUENCE [LARGE SCALE MRNA] OF 147-887 (ISOFORM 1)</scope>
    <source>
        <tissue>Uterus</tissue>
    </source>
</reference>
<reference key="5">
    <citation type="journal article" date="2004" name="J. Biol. Chem.">
        <title>Identification of a human cytoplasmic poly(A) nuclease complex stimulated by poly(A)-binding protein.</title>
        <authorList>
            <person name="Uchida N."/>
            <person name="Hoshino S."/>
            <person name="Katada T."/>
        </authorList>
    </citation>
    <scope>NUCLEOTIDE SEQUENCE [MRNA] OF 147-887 (ISOFORMS 1 AND 3)</scope>
    <scope>FUNCTION</scope>
    <scope>INTERACTION WITH PAN2 AND POLYADENYLATE-BINDING PROTEIN</scope>
    <scope>SUBCELLULAR LOCATION</scope>
    <source>
        <tissue>Cervix carcinoma</tissue>
    </source>
</reference>
<reference key="6">
    <citation type="journal article" date="2007" name="BMC Genomics">
        <title>The full-ORF clone resource of the German cDNA consortium.</title>
        <authorList>
            <person name="Bechtel S."/>
            <person name="Rosenfelder H."/>
            <person name="Duda A."/>
            <person name="Schmidt C.P."/>
            <person name="Ernst U."/>
            <person name="Wellenreuther R."/>
            <person name="Mehrle A."/>
            <person name="Schuster C."/>
            <person name="Bahr A."/>
            <person name="Bloecker H."/>
            <person name="Heubner D."/>
            <person name="Hoerlein A."/>
            <person name="Michel G."/>
            <person name="Wedler H."/>
            <person name="Koehrer K."/>
            <person name="Ottenwaelder B."/>
            <person name="Poustka A."/>
            <person name="Wiemann S."/>
            <person name="Schupp I."/>
        </authorList>
    </citation>
    <scope>NUCLEOTIDE SEQUENCE [LARGE SCALE MRNA] OF 654-887 (ISOFORMS 1/2/3)</scope>
    <source>
        <tissue>Adrenal gland</tissue>
    </source>
</reference>
<reference key="7">
    <citation type="journal article" date="2007" name="Genes Dev.">
        <title>Mechanism of mRNA deadenylation: evidence for a molecular interplay between translation termination factor eRF3 and mRNA deadenylases.</title>
        <authorList>
            <person name="Funakoshi Y."/>
            <person name="Doi Y."/>
            <person name="Hosoda N."/>
            <person name="Uchida N."/>
            <person name="Osawa M."/>
            <person name="Shimada I."/>
            <person name="Tsujimoto M."/>
            <person name="Suzuki T."/>
            <person name="Katada T."/>
            <person name="Hoshino S."/>
        </authorList>
    </citation>
    <scope>INTERACTION WITH PABPC1</scope>
    <scope>MUTAGENESIS OF TYR-203 AND PHE-293</scope>
</reference>
<reference key="8">
    <citation type="journal article" date="2007" name="J. Biol. Chem.">
        <title>Poly(A) nuclease interacts with the C-terminal domain of polyadenylate-binding protein domain from poly(A)-binding protein.</title>
        <authorList>
            <person name="Siddiqui N."/>
            <person name="Mangus D.A."/>
            <person name="Chang T.C."/>
            <person name="Palermino J.M."/>
            <person name="Shyu A.B."/>
            <person name="Gehring K."/>
        </authorList>
    </citation>
    <scope>INTERACTION WITH PABPC</scope>
    <scope>MUTAGENESIS OF PHE-293</scope>
</reference>
<reference key="9">
    <citation type="journal article" date="2008" name="J. Cell Biol.">
        <title>Deadenylation is prerequisite for P-body formation and mRNA decay in mammalian cells.</title>
        <authorList>
            <person name="Zheng D."/>
            <person name="Ezzeddine N."/>
            <person name="Chen C.Y."/>
            <person name="Zhu W."/>
            <person name="He X."/>
            <person name="Shyu A.B."/>
        </authorList>
    </citation>
    <scope>SUBCELLULAR LOCATION</scope>
</reference>
<reference key="10">
    <citation type="journal article" date="2008" name="Proc. Natl. Acad. Sci. U.S.A.">
        <title>A quantitative atlas of mitotic phosphorylation.</title>
        <authorList>
            <person name="Dephoure N."/>
            <person name="Zhou C."/>
            <person name="Villen J."/>
            <person name="Beausoleil S.A."/>
            <person name="Bakalarski C.E."/>
            <person name="Elledge S.J."/>
            <person name="Gygi S.P."/>
        </authorList>
    </citation>
    <scope>IDENTIFICATION BY MASS SPECTROMETRY [LARGE SCALE ANALYSIS]</scope>
    <source>
        <tissue>Cervix carcinoma</tissue>
    </source>
</reference>
<reference key="11">
    <citation type="journal article" date="2011" name="Mol. Cell">
        <title>GW182 proteins directly recruit cytoplasmic deadenylase complexes to miRNA targets.</title>
        <authorList>
            <person name="Braun J.E."/>
            <person name="Huntzinger E."/>
            <person name="Fauser M."/>
            <person name="Izaurralde E."/>
        </authorList>
    </citation>
    <scope>INTERACTION WITH TNRC6A; TNRC6B AND TNRC6C</scope>
</reference>
<reference key="12">
    <citation type="journal article" date="2013" name="J. Proteome Res.">
        <title>Toward a comprehensive characterization of a human cancer cell phosphoproteome.</title>
        <authorList>
            <person name="Zhou H."/>
            <person name="Di Palma S."/>
            <person name="Preisinger C."/>
            <person name="Peng M."/>
            <person name="Polat A.N."/>
            <person name="Heck A.J."/>
            <person name="Mohammed S."/>
        </authorList>
    </citation>
    <scope>PHOSPHORYLATION [LARGE SCALE ANALYSIS] AT SER-354</scope>
    <scope>IDENTIFICATION BY MASS SPECTROMETRY [LARGE SCALE ANALYSIS]</scope>
    <source>
        <tissue>Cervix carcinoma</tissue>
        <tissue>Erythroleukemia</tissue>
    </source>
</reference>
<reference key="13">
    <citation type="journal article" date="2013" name="Mol. Cell">
        <title>Structure of the PAN3 pseudokinase reveals the basis for interactions with the PAN2 deadenylase and the GW182 proteins.</title>
        <authorList>
            <person name="Christie M."/>
            <person name="Boland A."/>
            <person name="Huntzinger E."/>
            <person name="Weichenrieder O."/>
            <person name="Izaurralde E."/>
        </authorList>
    </citation>
    <scope>FUNCTION</scope>
    <scope>SUBUNIT</scope>
    <scope>INTERACTION WITH PAN2</scope>
    <scope>ATP-BINDING</scope>
</reference>
<reference key="14">
    <citation type="journal article" date="2017" name="RNA">
        <title>Antagonistic actions of two human Pan3 isoforms on global mRNA turnover.</title>
        <authorList>
            <person name="Chen C.A."/>
            <person name="Zhang Y."/>
            <person name="Xiang Y."/>
            <person name="Han L."/>
            <person name="Chang J.T."/>
            <person name="Shyu A.B."/>
        </authorList>
    </citation>
    <scope>FUNCTION (ISOFORMS 1 AND 3)</scope>
    <scope>INTERACTION WITH PAN2 AND PABPC1 (ISOFORMS 1 AND 3)</scope>
    <scope>SUBCELLULAR LOCATION (ISOFORMS 1 AND 3)</scope>
    <scope>DOMAIN</scope>
</reference>
<keyword id="KW-0025">Alternative splicing</keyword>
<keyword id="KW-0067">ATP-binding</keyword>
<keyword id="KW-0175">Coiled coil</keyword>
<keyword id="KW-0963">Cytoplasm</keyword>
<keyword id="KW-0479">Metal-binding</keyword>
<keyword id="KW-0507">mRNA processing</keyword>
<keyword id="KW-0547">Nucleotide-binding</keyword>
<keyword id="KW-0539">Nucleus</keyword>
<keyword id="KW-0597">Phosphoprotein</keyword>
<keyword id="KW-1267">Proteomics identification</keyword>
<keyword id="KW-1185">Reference proteome</keyword>
<keyword id="KW-0862">Zinc</keyword>
<keyword id="KW-0863">Zinc-finger</keyword>